<organism>
    <name type="scientific">Oryza sativa subsp. japonica</name>
    <name type="common">Rice</name>
    <dbReference type="NCBI Taxonomy" id="39947"/>
    <lineage>
        <taxon>Eukaryota</taxon>
        <taxon>Viridiplantae</taxon>
        <taxon>Streptophyta</taxon>
        <taxon>Embryophyta</taxon>
        <taxon>Tracheophyta</taxon>
        <taxon>Spermatophyta</taxon>
        <taxon>Magnoliopsida</taxon>
        <taxon>Liliopsida</taxon>
        <taxon>Poales</taxon>
        <taxon>Poaceae</taxon>
        <taxon>BOP clade</taxon>
        <taxon>Oryzoideae</taxon>
        <taxon>Oryzeae</taxon>
        <taxon>Oryzinae</taxon>
        <taxon>Oryza</taxon>
        <taxon>Oryza sativa</taxon>
    </lineage>
</organism>
<comment type="function">
    <text evidence="1">Aux/IAA proteins are short-lived transcriptional factors that function as repressors of early auxin response genes at low auxin concentrations.</text>
</comment>
<comment type="subunit">
    <text evidence="1">Homodimers and heterodimers.</text>
</comment>
<comment type="subcellular location">
    <subcellularLocation>
        <location evidence="1">Nucleus</location>
    </subcellularLocation>
</comment>
<comment type="tissue specificity">
    <text evidence="4">Highly expressed in flowers. Expressed in roots and seedlings.</text>
</comment>
<comment type="induction">
    <text evidence="4">By auxin.</text>
</comment>
<comment type="miscellaneous">
    <text>Lacks the EAR-like motif (domain I) which is one of the conserved features of the Aux/IAA family.</text>
</comment>
<comment type="similarity">
    <text evidence="5">Belongs to the Aux/IAA family.</text>
</comment>
<name>IAA22_ORYSJ</name>
<keyword id="KW-0927">Auxin signaling pathway</keyword>
<keyword id="KW-0539">Nucleus</keyword>
<keyword id="KW-1185">Reference proteome</keyword>
<keyword id="KW-0678">Repressor</keyword>
<keyword id="KW-0804">Transcription</keyword>
<keyword id="KW-0805">Transcription regulation</keyword>
<gene>
    <name type="primary">IAA22</name>
    <name type="ordered locus">Os06g0355300</name>
    <name type="ordered locus">LOC_Os06g24850</name>
    <name type="ORF">OSJNBa0021M10.5</name>
</gene>
<accession>Q69TU6</accession>
<feature type="chain" id="PRO_0000223221" description="Auxin-responsive protein IAA22">
    <location>
        <begin position="1"/>
        <end position="265"/>
    </location>
</feature>
<feature type="domain" description="PB1" evidence="2">
    <location>
        <begin position="91"/>
        <end position="194"/>
    </location>
</feature>
<feature type="region of interest" description="Disordered" evidence="3">
    <location>
        <begin position="54"/>
        <end position="88"/>
    </location>
</feature>
<feature type="region of interest" description="Disordered" evidence="3">
    <location>
        <begin position="172"/>
        <end position="199"/>
    </location>
</feature>
<feature type="compositionally biased region" description="Basic and acidic residues" evidence="3">
    <location>
        <begin position="65"/>
        <end position="88"/>
    </location>
</feature>
<evidence type="ECO:0000250" key="1"/>
<evidence type="ECO:0000255" key="2">
    <source>
        <dbReference type="PROSITE-ProRule" id="PRU01081"/>
    </source>
</evidence>
<evidence type="ECO:0000256" key="3">
    <source>
        <dbReference type="SAM" id="MobiDB-lite"/>
    </source>
</evidence>
<evidence type="ECO:0000269" key="4">
    <source>
    </source>
</evidence>
<evidence type="ECO:0000305" key="5"/>
<dbReference type="EMBL" id="AP004732">
    <property type="protein sequence ID" value="BAD35731.1"/>
    <property type="molecule type" value="Genomic_DNA"/>
</dbReference>
<dbReference type="EMBL" id="AP014962">
    <property type="status" value="NOT_ANNOTATED_CDS"/>
    <property type="molecule type" value="Genomic_DNA"/>
</dbReference>
<dbReference type="FunCoup" id="Q69TU6">
    <property type="interactions" value="28"/>
</dbReference>
<dbReference type="STRING" id="39947.Q69TU6"/>
<dbReference type="PaxDb" id="39947-Q69TU6"/>
<dbReference type="InParanoid" id="Q69TU6"/>
<dbReference type="Proteomes" id="UP000000763">
    <property type="component" value="Chromosome 6"/>
</dbReference>
<dbReference type="Proteomes" id="UP000059680">
    <property type="component" value="Chromosome 6"/>
</dbReference>
<dbReference type="GO" id="GO:0005634">
    <property type="term" value="C:nucleus"/>
    <property type="evidence" value="ECO:0007669"/>
    <property type="project" value="UniProtKB-SubCell"/>
</dbReference>
<dbReference type="GO" id="GO:0009734">
    <property type="term" value="P:auxin-activated signaling pathway"/>
    <property type="evidence" value="ECO:0007669"/>
    <property type="project" value="UniProtKB-KW"/>
</dbReference>
<dbReference type="GO" id="GO:0006355">
    <property type="term" value="P:regulation of DNA-templated transcription"/>
    <property type="evidence" value="ECO:0007669"/>
    <property type="project" value="InterPro"/>
</dbReference>
<dbReference type="Gene3D" id="3.10.20.90">
    <property type="entry name" value="Phosphatidylinositol 3-kinase Catalytic Subunit, Chain A, domain 1"/>
    <property type="match status" value="1"/>
</dbReference>
<dbReference type="InterPro" id="IPR033389">
    <property type="entry name" value="AUX/IAA_dom"/>
</dbReference>
<dbReference type="InterPro" id="IPR003311">
    <property type="entry name" value="AUX_IAA"/>
</dbReference>
<dbReference type="InterPro" id="IPR053793">
    <property type="entry name" value="PB1-like"/>
</dbReference>
<dbReference type="PANTHER" id="PTHR31734">
    <property type="entry name" value="AUXIN-RESPONSIVE PROTEIN IAA17"/>
    <property type="match status" value="1"/>
</dbReference>
<dbReference type="PANTHER" id="PTHR31734:SF120">
    <property type="entry name" value="AUXIN-RESPONSIVE PROTEIN IAA25"/>
    <property type="match status" value="1"/>
</dbReference>
<dbReference type="Pfam" id="PF02309">
    <property type="entry name" value="AUX_IAA"/>
    <property type="match status" value="1"/>
</dbReference>
<dbReference type="SUPFAM" id="SSF54277">
    <property type="entry name" value="CAD &amp; PB1 domains"/>
    <property type="match status" value="1"/>
</dbReference>
<dbReference type="PROSITE" id="PS51745">
    <property type="entry name" value="PB1"/>
    <property type="match status" value="1"/>
</dbReference>
<sequence>MKLKAAAVVSCDFGKGKLYPQVMGAGWNESGENRAASSAQLVGWPPVRTFRKNLSTPKPADADDLMNKMKPCSDEGHGSRDAAQERRPSSTMFVKVNLEGYAVGRKIDLKAHRSYDSLSQALQSMFHGFLSDGIATRDNELQRMEEGSKKRYVLVYEDNEGDRMLVGDVPWDGREAGSGRRPAAGVDQVSERPDVSPAMATTPAATVAVTQRRELTNLAATVAAHVLVFLASGQGHINCMMHFAMGDIVELLESLGTNGSLVKGD</sequence>
<protein>
    <recommendedName>
        <fullName>Auxin-responsive protein IAA22</fullName>
    </recommendedName>
    <alternativeName>
        <fullName>Indoleacetic acid-induced protein 22</fullName>
    </alternativeName>
</protein>
<proteinExistence type="evidence at transcript level"/>
<reference key="1">
    <citation type="journal article" date="2005" name="Nature">
        <title>The map-based sequence of the rice genome.</title>
        <authorList>
            <consortium name="International rice genome sequencing project (IRGSP)"/>
        </authorList>
    </citation>
    <scope>NUCLEOTIDE SEQUENCE [LARGE SCALE GENOMIC DNA]</scope>
    <source>
        <strain>cv. Nipponbare</strain>
    </source>
</reference>
<reference key="2">
    <citation type="journal article" date="2013" name="Rice">
        <title>Improvement of the Oryza sativa Nipponbare reference genome using next generation sequence and optical map data.</title>
        <authorList>
            <person name="Kawahara Y."/>
            <person name="de la Bastide M."/>
            <person name="Hamilton J.P."/>
            <person name="Kanamori H."/>
            <person name="McCombie W.R."/>
            <person name="Ouyang S."/>
            <person name="Schwartz D.C."/>
            <person name="Tanaka T."/>
            <person name="Wu J."/>
            <person name="Zhou S."/>
            <person name="Childs K.L."/>
            <person name="Davidson R.M."/>
            <person name="Lin H."/>
            <person name="Quesada-Ocampo L."/>
            <person name="Vaillancourt B."/>
            <person name="Sakai H."/>
            <person name="Lee S.S."/>
            <person name="Kim J."/>
            <person name="Numa H."/>
            <person name="Itoh T."/>
            <person name="Buell C.R."/>
            <person name="Matsumoto T."/>
        </authorList>
    </citation>
    <scope>GENOME REANNOTATION</scope>
    <source>
        <strain>cv. Nipponbare</strain>
    </source>
</reference>
<reference key="3">
    <citation type="journal article" date="2006" name="Funct. Integr. Genomics">
        <title>Structure and expression analysis of early auxin-responsive Aux/IAA gene family in rice (Oryza sativa).</title>
        <authorList>
            <person name="Jain M."/>
            <person name="Kaur N."/>
            <person name="Garg R."/>
            <person name="Thakur J.K."/>
            <person name="Tyagi A.K."/>
            <person name="Khurana J.P."/>
        </authorList>
    </citation>
    <scope>TISSUE SPECIFICITY</scope>
    <scope>INDUCTION</scope>
    <scope>NOMENCLATURE</scope>
</reference>